<gene>
    <name type="primary">hisE</name>
    <name type="ordered locus">MT2182</name>
</gene>
<protein>
    <recommendedName>
        <fullName>Phosphoribosyl-ATP pyrophosphatase</fullName>
        <shortName>PRA-PH</shortName>
        <ecNumber>3.6.1.31</ecNumber>
    </recommendedName>
</protein>
<feature type="chain" id="PRO_0000427276" description="Phosphoribosyl-ATP pyrophosphatase">
    <location>
        <begin position="1"/>
        <end position="93"/>
    </location>
</feature>
<comment type="catalytic activity">
    <reaction>
        <text>1-(5-phospho-beta-D-ribosyl)-ATP + H2O = 1-(5-phospho-beta-D-ribosyl)-5'-AMP + diphosphate + H(+)</text>
        <dbReference type="Rhea" id="RHEA:22828"/>
        <dbReference type="ChEBI" id="CHEBI:15377"/>
        <dbReference type="ChEBI" id="CHEBI:15378"/>
        <dbReference type="ChEBI" id="CHEBI:33019"/>
        <dbReference type="ChEBI" id="CHEBI:59457"/>
        <dbReference type="ChEBI" id="CHEBI:73183"/>
        <dbReference type="EC" id="3.6.1.31"/>
    </reaction>
</comment>
<comment type="pathway">
    <text>Amino-acid biosynthesis; L-histidine biosynthesis; L-histidine from 5-phospho-alpha-D-ribose 1-diphosphate: step 2/9.</text>
</comment>
<comment type="subcellular location">
    <subcellularLocation>
        <location evidence="1">Cytoplasm</location>
    </subcellularLocation>
</comment>
<comment type="similarity">
    <text evidence="2">Belongs to the PRA-PH family.</text>
</comment>
<proteinExistence type="inferred from homology"/>
<name>HIS2_MYCTO</name>
<sequence>MQQSLAVKTFEDLFAELGDRARTRPADSTTVAALDGGVHALGKKLLEEAGEVWLAAEHESNDALAEEISQLLYWTQVLMISRGLSLDDVYRKL</sequence>
<accession>P9WMM8</accession>
<accession>L0TBF1</accession>
<accession>O33257</accession>
<accession>P0A5B1</accession>
<reference key="1">
    <citation type="journal article" date="2002" name="J. Bacteriol.">
        <title>Whole-genome comparison of Mycobacterium tuberculosis clinical and laboratory strains.</title>
        <authorList>
            <person name="Fleischmann R.D."/>
            <person name="Alland D."/>
            <person name="Eisen J.A."/>
            <person name="Carpenter L."/>
            <person name="White O."/>
            <person name="Peterson J.D."/>
            <person name="DeBoy R.T."/>
            <person name="Dodson R.J."/>
            <person name="Gwinn M.L."/>
            <person name="Haft D.H."/>
            <person name="Hickey E.K."/>
            <person name="Kolonay J.F."/>
            <person name="Nelson W.C."/>
            <person name="Umayam L.A."/>
            <person name="Ermolaeva M.D."/>
            <person name="Salzberg S.L."/>
            <person name="Delcher A."/>
            <person name="Utterback T.R."/>
            <person name="Weidman J.F."/>
            <person name="Khouri H.M."/>
            <person name="Gill J."/>
            <person name="Mikula A."/>
            <person name="Bishai W."/>
            <person name="Jacobs W.R. Jr."/>
            <person name="Venter J.C."/>
            <person name="Fraser C.M."/>
        </authorList>
    </citation>
    <scope>NUCLEOTIDE SEQUENCE [LARGE SCALE GENOMIC DNA]</scope>
    <source>
        <strain>CDC 1551 / Oshkosh</strain>
    </source>
</reference>
<evidence type="ECO:0000250" key="1"/>
<evidence type="ECO:0000305" key="2"/>
<keyword id="KW-0028">Amino-acid biosynthesis</keyword>
<keyword id="KW-0067">ATP-binding</keyword>
<keyword id="KW-0963">Cytoplasm</keyword>
<keyword id="KW-0368">Histidine biosynthesis</keyword>
<keyword id="KW-0378">Hydrolase</keyword>
<keyword id="KW-0547">Nucleotide-binding</keyword>
<keyword id="KW-1185">Reference proteome</keyword>
<dbReference type="EC" id="3.6.1.31"/>
<dbReference type="EMBL" id="AE000516">
    <property type="protein sequence ID" value="AAK46465.1"/>
    <property type="molecule type" value="Genomic_DNA"/>
</dbReference>
<dbReference type="PIR" id="E70513">
    <property type="entry name" value="E70513"/>
</dbReference>
<dbReference type="RefSeq" id="WP_003899180.1">
    <property type="nucleotide sequence ID" value="NZ_KK341227.1"/>
</dbReference>
<dbReference type="SMR" id="P9WMM8"/>
<dbReference type="KEGG" id="mtc:MT2182"/>
<dbReference type="PATRIC" id="fig|83331.31.peg.2352"/>
<dbReference type="HOGENOM" id="CLU_123337_2_1_11"/>
<dbReference type="UniPathway" id="UPA00031">
    <property type="reaction ID" value="UER00007"/>
</dbReference>
<dbReference type="Proteomes" id="UP000001020">
    <property type="component" value="Chromosome"/>
</dbReference>
<dbReference type="GO" id="GO:0005737">
    <property type="term" value="C:cytoplasm"/>
    <property type="evidence" value="ECO:0007669"/>
    <property type="project" value="UniProtKB-SubCell"/>
</dbReference>
<dbReference type="GO" id="GO:0005524">
    <property type="term" value="F:ATP binding"/>
    <property type="evidence" value="ECO:0007669"/>
    <property type="project" value="UniProtKB-KW"/>
</dbReference>
<dbReference type="GO" id="GO:0004636">
    <property type="term" value="F:phosphoribosyl-ATP diphosphatase activity"/>
    <property type="evidence" value="ECO:0007669"/>
    <property type="project" value="UniProtKB-UniRule"/>
</dbReference>
<dbReference type="GO" id="GO:0000105">
    <property type="term" value="P:L-histidine biosynthetic process"/>
    <property type="evidence" value="ECO:0007669"/>
    <property type="project" value="UniProtKB-UniRule"/>
</dbReference>
<dbReference type="CDD" id="cd11547">
    <property type="entry name" value="NTP-PPase_HisE"/>
    <property type="match status" value="1"/>
</dbReference>
<dbReference type="FunFam" id="1.10.287.1080:FF:000005">
    <property type="entry name" value="Phosphoribosyl-ATP pyrophosphatase"/>
    <property type="match status" value="1"/>
</dbReference>
<dbReference type="Gene3D" id="1.10.287.1080">
    <property type="entry name" value="MazG-like"/>
    <property type="match status" value="1"/>
</dbReference>
<dbReference type="HAMAP" id="MF_01020">
    <property type="entry name" value="HisE"/>
    <property type="match status" value="1"/>
</dbReference>
<dbReference type="InterPro" id="IPR008179">
    <property type="entry name" value="HisE"/>
</dbReference>
<dbReference type="InterPro" id="IPR021130">
    <property type="entry name" value="PRib-ATP_PPHydrolase-like"/>
</dbReference>
<dbReference type="NCBIfam" id="TIGR03188">
    <property type="entry name" value="histidine_hisI"/>
    <property type="match status" value="1"/>
</dbReference>
<dbReference type="NCBIfam" id="NF001610">
    <property type="entry name" value="PRK00400.1-1"/>
    <property type="match status" value="1"/>
</dbReference>
<dbReference type="PANTHER" id="PTHR42945">
    <property type="entry name" value="HISTIDINE BIOSYNTHESIS BIFUNCTIONAL PROTEIN"/>
    <property type="match status" value="1"/>
</dbReference>
<dbReference type="PANTHER" id="PTHR42945:SF1">
    <property type="entry name" value="HISTIDINE BIOSYNTHESIS BIFUNCTIONAL PROTEIN HIS7"/>
    <property type="match status" value="1"/>
</dbReference>
<dbReference type="Pfam" id="PF01503">
    <property type="entry name" value="PRA-PH"/>
    <property type="match status" value="1"/>
</dbReference>
<dbReference type="SUPFAM" id="SSF101386">
    <property type="entry name" value="all-alpha NTP pyrophosphatases"/>
    <property type="match status" value="1"/>
</dbReference>
<organism>
    <name type="scientific">Mycobacterium tuberculosis (strain CDC 1551 / Oshkosh)</name>
    <dbReference type="NCBI Taxonomy" id="83331"/>
    <lineage>
        <taxon>Bacteria</taxon>
        <taxon>Bacillati</taxon>
        <taxon>Actinomycetota</taxon>
        <taxon>Actinomycetes</taxon>
        <taxon>Mycobacteriales</taxon>
        <taxon>Mycobacteriaceae</taxon>
        <taxon>Mycobacterium</taxon>
        <taxon>Mycobacterium tuberculosis complex</taxon>
    </lineage>
</organism>